<proteinExistence type="inferred from homology"/>
<sequence>MLNIEQIKEIIPHRYPFLLVDKILEVDEGKRAVGIKNVSANEEFFNGHFPDYAVMPGVLIVEALAQVGAVAVLKKEENRGRLAFFAGIDNCRFKKQVRPGDQLRLEVEMTRVRGPIGKGKAIATVDGEVACEAEITFAIGDKKE</sequence>
<name>FABZ_BACC4</name>
<comment type="function">
    <text evidence="1">Involved in unsaturated fatty acids biosynthesis. Catalyzes the dehydration of short chain beta-hydroxyacyl-ACPs and long chain saturated and unsaturated beta-hydroxyacyl-ACPs.</text>
</comment>
<comment type="catalytic activity">
    <reaction evidence="1">
        <text>a (3R)-hydroxyacyl-[ACP] = a (2E)-enoyl-[ACP] + H2O</text>
        <dbReference type="Rhea" id="RHEA:13097"/>
        <dbReference type="Rhea" id="RHEA-COMP:9925"/>
        <dbReference type="Rhea" id="RHEA-COMP:9945"/>
        <dbReference type="ChEBI" id="CHEBI:15377"/>
        <dbReference type="ChEBI" id="CHEBI:78784"/>
        <dbReference type="ChEBI" id="CHEBI:78827"/>
        <dbReference type="EC" id="4.2.1.59"/>
    </reaction>
</comment>
<comment type="subcellular location">
    <subcellularLocation>
        <location evidence="1">Cytoplasm</location>
    </subcellularLocation>
</comment>
<comment type="similarity">
    <text evidence="1">Belongs to the thioester dehydratase family. FabZ subfamily.</text>
</comment>
<organism>
    <name type="scientific">Bacillus cereus (strain B4264)</name>
    <dbReference type="NCBI Taxonomy" id="405532"/>
    <lineage>
        <taxon>Bacteria</taxon>
        <taxon>Bacillati</taxon>
        <taxon>Bacillota</taxon>
        <taxon>Bacilli</taxon>
        <taxon>Bacillales</taxon>
        <taxon>Bacillaceae</taxon>
        <taxon>Bacillus</taxon>
        <taxon>Bacillus cereus group</taxon>
    </lineage>
</organism>
<accession>B7HFH4</accession>
<protein>
    <recommendedName>
        <fullName evidence="1">3-hydroxyacyl-[acyl-carrier-protein] dehydratase FabZ</fullName>
        <ecNumber evidence="1">4.2.1.59</ecNumber>
    </recommendedName>
    <alternativeName>
        <fullName evidence="1">(3R)-hydroxymyristoyl-[acyl-carrier-protein] dehydratase</fullName>
        <shortName evidence="1">(3R)-hydroxymyristoyl-ACP dehydrase</shortName>
    </alternativeName>
    <alternativeName>
        <fullName evidence="1">Beta-hydroxyacyl-ACP dehydratase</fullName>
    </alternativeName>
</protein>
<dbReference type="EC" id="4.2.1.59" evidence="1"/>
<dbReference type="EMBL" id="CP001176">
    <property type="protein sequence ID" value="ACK59132.1"/>
    <property type="molecule type" value="Genomic_DNA"/>
</dbReference>
<dbReference type="RefSeq" id="WP_000931959.1">
    <property type="nucleotide sequence ID" value="NZ_VEHB01000004.1"/>
</dbReference>
<dbReference type="SMR" id="B7HFH4"/>
<dbReference type="GeneID" id="75088464"/>
<dbReference type="KEGG" id="bcb:BCB4264_A5399"/>
<dbReference type="HOGENOM" id="CLU_078912_3_0_9"/>
<dbReference type="Proteomes" id="UP000007096">
    <property type="component" value="Chromosome"/>
</dbReference>
<dbReference type="GO" id="GO:0005737">
    <property type="term" value="C:cytoplasm"/>
    <property type="evidence" value="ECO:0007669"/>
    <property type="project" value="UniProtKB-SubCell"/>
</dbReference>
<dbReference type="GO" id="GO:0016020">
    <property type="term" value="C:membrane"/>
    <property type="evidence" value="ECO:0007669"/>
    <property type="project" value="GOC"/>
</dbReference>
<dbReference type="GO" id="GO:0019171">
    <property type="term" value="F:(3R)-hydroxyacyl-[acyl-carrier-protein] dehydratase activity"/>
    <property type="evidence" value="ECO:0007669"/>
    <property type="project" value="UniProtKB-EC"/>
</dbReference>
<dbReference type="GO" id="GO:0006633">
    <property type="term" value="P:fatty acid biosynthetic process"/>
    <property type="evidence" value="ECO:0007669"/>
    <property type="project" value="UniProtKB-UniRule"/>
</dbReference>
<dbReference type="GO" id="GO:0009245">
    <property type="term" value="P:lipid A biosynthetic process"/>
    <property type="evidence" value="ECO:0007669"/>
    <property type="project" value="UniProtKB-UniRule"/>
</dbReference>
<dbReference type="CDD" id="cd01288">
    <property type="entry name" value="FabZ"/>
    <property type="match status" value="1"/>
</dbReference>
<dbReference type="FunFam" id="3.10.129.10:FF:000001">
    <property type="entry name" value="3-hydroxyacyl-[acyl-carrier-protein] dehydratase FabZ"/>
    <property type="match status" value="1"/>
</dbReference>
<dbReference type="Gene3D" id="3.10.129.10">
    <property type="entry name" value="Hotdog Thioesterase"/>
    <property type="match status" value="1"/>
</dbReference>
<dbReference type="HAMAP" id="MF_00406">
    <property type="entry name" value="FabZ"/>
    <property type="match status" value="1"/>
</dbReference>
<dbReference type="InterPro" id="IPR013114">
    <property type="entry name" value="FabA_FabZ"/>
</dbReference>
<dbReference type="InterPro" id="IPR010084">
    <property type="entry name" value="FabZ"/>
</dbReference>
<dbReference type="InterPro" id="IPR029069">
    <property type="entry name" value="HotDog_dom_sf"/>
</dbReference>
<dbReference type="NCBIfam" id="TIGR01750">
    <property type="entry name" value="fabZ"/>
    <property type="match status" value="1"/>
</dbReference>
<dbReference type="NCBIfam" id="NF000582">
    <property type="entry name" value="PRK00006.1"/>
    <property type="match status" value="1"/>
</dbReference>
<dbReference type="PANTHER" id="PTHR30272">
    <property type="entry name" value="3-HYDROXYACYL-[ACYL-CARRIER-PROTEIN] DEHYDRATASE"/>
    <property type="match status" value="1"/>
</dbReference>
<dbReference type="PANTHER" id="PTHR30272:SF1">
    <property type="entry name" value="3-HYDROXYACYL-[ACYL-CARRIER-PROTEIN] DEHYDRATASE"/>
    <property type="match status" value="1"/>
</dbReference>
<dbReference type="Pfam" id="PF07977">
    <property type="entry name" value="FabA"/>
    <property type="match status" value="1"/>
</dbReference>
<dbReference type="SUPFAM" id="SSF54637">
    <property type="entry name" value="Thioesterase/thiol ester dehydrase-isomerase"/>
    <property type="match status" value="1"/>
</dbReference>
<keyword id="KW-0963">Cytoplasm</keyword>
<keyword id="KW-0441">Lipid A biosynthesis</keyword>
<keyword id="KW-0444">Lipid biosynthesis</keyword>
<keyword id="KW-0443">Lipid metabolism</keyword>
<keyword id="KW-0456">Lyase</keyword>
<gene>
    <name evidence="1" type="primary">fabZ</name>
    <name type="ordered locus">BCB4264_A5399</name>
</gene>
<feature type="chain" id="PRO_1000197276" description="3-hydroxyacyl-[acyl-carrier-protein] dehydratase FabZ">
    <location>
        <begin position="1"/>
        <end position="144"/>
    </location>
</feature>
<feature type="active site" evidence="1">
    <location>
        <position position="48"/>
    </location>
</feature>
<evidence type="ECO:0000255" key="1">
    <source>
        <dbReference type="HAMAP-Rule" id="MF_00406"/>
    </source>
</evidence>
<reference key="1">
    <citation type="submission" date="2008-10" db="EMBL/GenBank/DDBJ databases">
        <title>Genome sequence of Bacillus cereus B4264.</title>
        <authorList>
            <person name="Dodson R.J."/>
            <person name="Durkin A.S."/>
            <person name="Rosovitz M.J."/>
            <person name="Rasko D.A."/>
            <person name="Hoffmaster A."/>
            <person name="Ravel J."/>
            <person name="Sutton G."/>
        </authorList>
    </citation>
    <scope>NUCLEOTIDE SEQUENCE [LARGE SCALE GENOMIC DNA]</scope>
    <source>
        <strain>B4264</strain>
    </source>
</reference>